<gene>
    <name type="ordered locus">MJ0685</name>
</gene>
<comment type="similarity">
    <text evidence="2">To M.jannaschii MJ0084 and MJ0823.</text>
</comment>
<name>Y685_METJA</name>
<reference key="1">
    <citation type="journal article" date="1996" name="Science">
        <title>Complete genome sequence of the methanogenic archaeon, Methanococcus jannaschii.</title>
        <authorList>
            <person name="Bult C.J."/>
            <person name="White O."/>
            <person name="Olsen G.J."/>
            <person name="Zhou L."/>
            <person name="Fleischmann R.D."/>
            <person name="Sutton G.G."/>
            <person name="Blake J.A."/>
            <person name="FitzGerald L.M."/>
            <person name="Clayton R.A."/>
            <person name="Gocayne J.D."/>
            <person name="Kerlavage A.R."/>
            <person name="Dougherty B.A."/>
            <person name="Tomb J.-F."/>
            <person name="Adams M.D."/>
            <person name="Reich C.I."/>
            <person name="Overbeek R."/>
            <person name="Kirkness E.F."/>
            <person name="Weinstock K.G."/>
            <person name="Merrick J.M."/>
            <person name="Glodek A."/>
            <person name="Scott J.L."/>
            <person name="Geoghagen N.S.M."/>
            <person name="Weidman J.F."/>
            <person name="Fuhrmann J.L."/>
            <person name="Nguyen D."/>
            <person name="Utterback T.R."/>
            <person name="Kelley J.M."/>
            <person name="Peterson J.D."/>
            <person name="Sadow P.W."/>
            <person name="Hanna M.C."/>
            <person name="Cotton M.D."/>
            <person name="Roberts K.M."/>
            <person name="Hurst M.A."/>
            <person name="Kaine B.P."/>
            <person name="Borodovsky M."/>
            <person name="Klenk H.-P."/>
            <person name="Fraser C.M."/>
            <person name="Smith H.O."/>
            <person name="Woese C.R."/>
            <person name="Venter J.C."/>
        </authorList>
    </citation>
    <scope>NUCLEOTIDE SEQUENCE [LARGE SCALE GENOMIC DNA]</scope>
    <source>
        <strain>ATCC 43067 / DSM 2661 / JAL-1 / JCM 10045 / NBRC 100440</strain>
    </source>
</reference>
<accession>Q58098</accession>
<sequence>MIIAVSGKGGVGKTAFTTLLIKALSKKTNSILVVDADPDSNLPETLGVEVEKTVGDIREELKKLVERDEIPAGMTKLDYLRSKIFEILVETKYYDLLVMGRPEGSGCYCSVNNWLRQIIDNLAKDYEFVVIDTEAGLEHLSRRTTQNVDVMIVITDASKRGLGTAKRIKKLANELEVKFKDIYVVANKVKPEYEELIDNYAKELGLNLIGKLPYNKEIAEYDLKGIPLWNLPENNEVYKKVEEIAEKIINKKF</sequence>
<evidence type="ECO:0000255" key="1"/>
<evidence type="ECO:0000305" key="2"/>
<dbReference type="EMBL" id="L77117">
    <property type="protein sequence ID" value="AAB98680.1"/>
    <property type="molecule type" value="Genomic_DNA"/>
</dbReference>
<dbReference type="PIR" id="E64385">
    <property type="entry name" value="E64385"/>
</dbReference>
<dbReference type="RefSeq" id="WP_010870190.1">
    <property type="nucleotide sequence ID" value="NC_000909.1"/>
</dbReference>
<dbReference type="SMR" id="Q58098"/>
<dbReference type="FunCoup" id="Q58098">
    <property type="interactions" value="2"/>
</dbReference>
<dbReference type="STRING" id="243232.MJ_0685"/>
<dbReference type="PaxDb" id="243232-MJ_0685"/>
<dbReference type="EnsemblBacteria" id="AAB98680">
    <property type="protein sequence ID" value="AAB98680"/>
    <property type="gene ID" value="MJ_0685"/>
</dbReference>
<dbReference type="GeneID" id="1451551"/>
<dbReference type="KEGG" id="mja:MJ_0685"/>
<dbReference type="eggNOG" id="arCOG00587">
    <property type="taxonomic scope" value="Archaea"/>
</dbReference>
<dbReference type="HOGENOM" id="CLU_082962_0_0_2"/>
<dbReference type="InParanoid" id="Q58098"/>
<dbReference type="OrthoDB" id="31168at2157"/>
<dbReference type="PhylomeDB" id="Q58098"/>
<dbReference type="Proteomes" id="UP000000805">
    <property type="component" value="Chromosome"/>
</dbReference>
<dbReference type="GO" id="GO:0009898">
    <property type="term" value="C:cytoplasmic side of plasma membrane"/>
    <property type="evidence" value="ECO:0000318"/>
    <property type="project" value="GO_Central"/>
</dbReference>
<dbReference type="GO" id="GO:0005829">
    <property type="term" value="C:cytosol"/>
    <property type="evidence" value="ECO:0000318"/>
    <property type="project" value="GO_Central"/>
</dbReference>
<dbReference type="GO" id="GO:0005524">
    <property type="term" value="F:ATP binding"/>
    <property type="evidence" value="ECO:0000318"/>
    <property type="project" value="GO_Central"/>
</dbReference>
<dbReference type="GO" id="GO:0016887">
    <property type="term" value="F:ATP hydrolysis activity"/>
    <property type="evidence" value="ECO:0000318"/>
    <property type="project" value="GO_Central"/>
</dbReference>
<dbReference type="CDD" id="cd02034">
    <property type="entry name" value="CooC1"/>
    <property type="match status" value="1"/>
</dbReference>
<dbReference type="FunFam" id="3.40.50.300:FF:001573">
    <property type="entry name" value="Carbon monoxide dehydrogenase accessory protein CooC"/>
    <property type="match status" value="1"/>
</dbReference>
<dbReference type="Gene3D" id="3.40.50.300">
    <property type="entry name" value="P-loop containing nucleotide triphosphate hydrolases"/>
    <property type="match status" value="1"/>
</dbReference>
<dbReference type="InterPro" id="IPR002586">
    <property type="entry name" value="CobQ/CobB/MinD/ParA_Nub-bd_dom"/>
</dbReference>
<dbReference type="InterPro" id="IPR014433">
    <property type="entry name" value="CooC"/>
</dbReference>
<dbReference type="InterPro" id="IPR027417">
    <property type="entry name" value="P-loop_NTPase"/>
</dbReference>
<dbReference type="InterPro" id="IPR050625">
    <property type="entry name" value="ParA/MinD_ATPase"/>
</dbReference>
<dbReference type="PANTHER" id="PTHR43384:SF7">
    <property type="entry name" value="CARBON-MONOXIDE DEHYDROGENASE ACCESSORY PROTEIN"/>
    <property type="match status" value="1"/>
</dbReference>
<dbReference type="PANTHER" id="PTHR43384">
    <property type="entry name" value="SEPTUM SITE-DETERMINING PROTEIN MIND HOMOLOG, CHLOROPLASTIC-RELATED"/>
    <property type="match status" value="1"/>
</dbReference>
<dbReference type="Pfam" id="PF01656">
    <property type="entry name" value="CbiA"/>
    <property type="match status" value="1"/>
</dbReference>
<dbReference type="PIRSF" id="PIRSF005647">
    <property type="entry name" value="CooC"/>
    <property type="match status" value="1"/>
</dbReference>
<dbReference type="SUPFAM" id="SSF52540">
    <property type="entry name" value="P-loop containing nucleoside triphosphate hydrolases"/>
    <property type="match status" value="1"/>
</dbReference>
<organism>
    <name type="scientific">Methanocaldococcus jannaschii (strain ATCC 43067 / DSM 2661 / JAL-1 / JCM 10045 / NBRC 100440)</name>
    <name type="common">Methanococcus jannaschii</name>
    <dbReference type="NCBI Taxonomy" id="243232"/>
    <lineage>
        <taxon>Archaea</taxon>
        <taxon>Methanobacteriati</taxon>
        <taxon>Methanobacteriota</taxon>
        <taxon>Methanomada group</taxon>
        <taxon>Methanococci</taxon>
        <taxon>Methanococcales</taxon>
        <taxon>Methanocaldococcaceae</taxon>
        <taxon>Methanocaldococcus</taxon>
    </lineage>
</organism>
<keyword id="KW-0067">ATP-binding</keyword>
<keyword id="KW-0547">Nucleotide-binding</keyword>
<keyword id="KW-1185">Reference proteome</keyword>
<protein>
    <recommendedName>
        <fullName>Uncharacterized ATP-binding protein MJ0685</fullName>
    </recommendedName>
</protein>
<proteinExistence type="predicted"/>
<feature type="chain" id="PRO_0000106988" description="Uncharacterized ATP-binding protein MJ0685">
    <location>
        <begin position="1"/>
        <end position="253"/>
    </location>
</feature>
<feature type="binding site" evidence="1">
    <location>
        <begin position="7"/>
        <end position="14"/>
    </location>
    <ligand>
        <name>ATP</name>
        <dbReference type="ChEBI" id="CHEBI:30616"/>
    </ligand>
</feature>